<protein>
    <recommendedName>
        <fullName>Vasopressin V1a receptor</fullName>
        <shortName>V1aR</shortName>
    </recommendedName>
    <alternativeName>
        <fullName>AVPR V1a</fullName>
    </alternativeName>
    <alternativeName>
        <fullName>Antidiuretic hormone receptor 1a</fullName>
    </alternativeName>
    <alternativeName>
        <fullName>Vascular/hepatic-type arginine vasopressin receptor</fullName>
    </alternativeName>
</protein>
<accession>P37288</accession>
<dbReference type="EMBL" id="L25615">
    <property type="protein sequence ID" value="AAA62271.1"/>
    <property type="molecule type" value="mRNA"/>
</dbReference>
<dbReference type="EMBL" id="U19906">
    <property type="protein sequence ID" value="AAB19232.1"/>
    <property type="molecule type" value="Genomic_DNA"/>
</dbReference>
<dbReference type="EMBL" id="S73899">
    <property type="protein sequence ID" value="AAC60638.1"/>
    <property type="molecule type" value="mRNA"/>
</dbReference>
<dbReference type="EMBL" id="AF030625">
    <property type="protein sequence ID" value="AAC51861.1"/>
    <property type="molecule type" value="mRNA"/>
</dbReference>
<dbReference type="EMBL" id="AF101725">
    <property type="protein sequence ID" value="AAD17891.1"/>
    <property type="molecule type" value="mRNA"/>
</dbReference>
<dbReference type="EMBL" id="AY322550">
    <property type="protein sequence ID" value="AAP84363.1"/>
    <property type="molecule type" value="mRNA"/>
</dbReference>
<dbReference type="EMBL" id="BC074803">
    <property type="protein sequence ID" value="AAH74803.1"/>
    <property type="molecule type" value="mRNA"/>
</dbReference>
<dbReference type="EMBL" id="BC074804">
    <property type="protein sequence ID" value="AAH74804.1"/>
    <property type="molecule type" value="mRNA"/>
</dbReference>
<dbReference type="CCDS" id="CCDS8965.1"/>
<dbReference type="PIR" id="A53046">
    <property type="entry name" value="A53046"/>
</dbReference>
<dbReference type="RefSeq" id="NP_000697.1">
    <property type="nucleotide sequence ID" value="NM_000706.5"/>
</dbReference>
<dbReference type="PDB" id="1YTV">
    <property type="method" value="X-ray"/>
    <property type="resolution" value="1.80 A"/>
    <property type="chains" value="M/N=362-418"/>
</dbReference>
<dbReference type="PDBsum" id="1YTV"/>
<dbReference type="SMR" id="P37288"/>
<dbReference type="BioGRID" id="107033">
    <property type="interactions" value="3"/>
</dbReference>
<dbReference type="CORUM" id="P37288"/>
<dbReference type="FunCoup" id="P37288">
    <property type="interactions" value="1038"/>
</dbReference>
<dbReference type="IntAct" id="P37288">
    <property type="interactions" value="4"/>
</dbReference>
<dbReference type="STRING" id="9606.ENSP00000299178"/>
<dbReference type="BindingDB" id="P37288"/>
<dbReference type="ChEMBL" id="CHEMBL1889"/>
<dbReference type="DrugBank" id="DB09059">
    <property type="generic name" value="Atosiban"/>
</dbReference>
<dbReference type="DrugBank" id="DB14823">
    <property type="generic name" value="Balovaptan"/>
</dbReference>
<dbReference type="DrugBank" id="DB00872">
    <property type="generic name" value="Conivaptan"/>
</dbReference>
<dbReference type="DrugBank" id="DB00035">
    <property type="generic name" value="Desmopressin"/>
</dbReference>
<dbReference type="DrugBank" id="DB00093">
    <property type="generic name" value="Felypressin"/>
</dbReference>
<dbReference type="DrugBank" id="DB14642">
    <property type="generic name" value="Lypressin"/>
</dbReference>
<dbReference type="DrugBank" id="DB12643">
    <property type="generic name" value="Nelivaptan"/>
</dbReference>
<dbReference type="DrugBank" id="DB00107">
    <property type="generic name" value="Oxytocin"/>
</dbReference>
<dbReference type="DrugBank" id="DB16279">
    <property type="generic name" value="Pecavaptan"/>
</dbReference>
<dbReference type="DrugBank" id="DB05452">
    <property type="generic name" value="PH-284"/>
</dbReference>
<dbReference type="DrugBank" id="DB13929">
    <property type="generic name" value="Relcovaptan"/>
</dbReference>
<dbReference type="DrugBank" id="DB12495">
    <property type="generic name" value="Selepressin"/>
</dbReference>
<dbReference type="DrugBank" id="DB16968">
    <property type="generic name" value="SRX-246"/>
</dbReference>
<dbReference type="DrugBank" id="DB02638">
    <property type="generic name" value="Terlipressin"/>
</dbReference>
<dbReference type="DrugBank" id="DB06212">
    <property type="generic name" value="Tolvaptan"/>
</dbReference>
<dbReference type="DrugBank" id="DB00067">
    <property type="generic name" value="Vasopressin"/>
</dbReference>
<dbReference type="DrugCentral" id="P37288"/>
<dbReference type="GuidetoPHARMACOLOGY" id="366"/>
<dbReference type="GlyCosmos" id="P37288">
    <property type="glycosylation" value="2 sites, No reported glycans"/>
</dbReference>
<dbReference type="GlyGen" id="P37288">
    <property type="glycosylation" value="3 sites"/>
</dbReference>
<dbReference type="iPTMnet" id="P37288"/>
<dbReference type="PhosphoSitePlus" id="P37288"/>
<dbReference type="BioMuta" id="AVPR1A"/>
<dbReference type="DMDM" id="586197"/>
<dbReference type="MassIVE" id="P37288"/>
<dbReference type="PaxDb" id="9606-ENSP00000299178"/>
<dbReference type="PeptideAtlas" id="P37288"/>
<dbReference type="ProteomicsDB" id="55276"/>
<dbReference type="Antibodypedia" id="29106">
    <property type="antibodies" value="287 antibodies from 34 providers"/>
</dbReference>
<dbReference type="CPTC" id="P37288">
    <property type="antibodies" value="1 antibody"/>
</dbReference>
<dbReference type="DNASU" id="552"/>
<dbReference type="Ensembl" id="ENST00000299178.4">
    <property type="protein sequence ID" value="ENSP00000299178.3"/>
    <property type="gene ID" value="ENSG00000166148.4"/>
</dbReference>
<dbReference type="GeneID" id="552"/>
<dbReference type="KEGG" id="hsa:552"/>
<dbReference type="MANE-Select" id="ENST00000299178.4">
    <property type="protein sequence ID" value="ENSP00000299178.3"/>
    <property type="RefSeq nucleotide sequence ID" value="NM_000706.5"/>
    <property type="RefSeq protein sequence ID" value="NP_000697.1"/>
</dbReference>
<dbReference type="AGR" id="HGNC:895"/>
<dbReference type="CTD" id="552"/>
<dbReference type="DisGeNET" id="552"/>
<dbReference type="GeneCards" id="AVPR1A"/>
<dbReference type="HGNC" id="HGNC:895">
    <property type="gene designation" value="AVPR1A"/>
</dbReference>
<dbReference type="HPA" id="ENSG00000166148">
    <property type="expression patterns" value="Tissue enhanced (adrenal)"/>
</dbReference>
<dbReference type="MIM" id="600821">
    <property type="type" value="gene"/>
</dbReference>
<dbReference type="neXtProt" id="NX_P37288"/>
<dbReference type="OpenTargets" id="ENSG00000166148"/>
<dbReference type="PharmGKB" id="PA25187"/>
<dbReference type="VEuPathDB" id="HostDB:ENSG00000166148"/>
<dbReference type="eggNOG" id="KOG3656">
    <property type="taxonomic scope" value="Eukaryota"/>
</dbReference>
<dbReference type="GeneTree" id="ENSGT01050000244882"/>
<dbReference type="HOGENOM" id="CLU_009579_15_3_1"/>
<dbReference type="InParanoid" id="P37288"/>
<dbReference type="OMA" id="QYFIFSM"/>
<dbReference type="OrthoDB" id="6435638at2759"/>
<dbReference type="PAN-GO" id="P37288">
    <property type="GO annotations" value="6 GO annotations based on evolutionary models"/>
</dbReference>
<dbReference type="PhylomeDB" id="P37288"/>
<dbReference type="TreeFam" id="TF106499"/>
<dbReference type="PathwayCommons" id="P37288"/>
<dbReference type="Reactome" id="R-HSA-388479">
    <property type="pathway name" value="Vasopressin-like receptors"/>
</dbReference>
<dbReference type="Reactome" id="R-HSA-416476">
    <property type="pathway name" value="G alpha (q) signalling events"/>
</dbReference>
<dbReference type="Reactome" id="R-HSA-5619099">
    <property type="pathway name" value="Defective AVP does not bind AVPR1A,B and causes neurohypophyseal diabetes insipidus (NDI)"/>
</dbReference>
<dbReference type="SignaLink" id="P37288"/>
<dbReference type="SIGNOR" id="P37288"/>
<dbReference type="BioGRID-ORCS" id="552">
    <property type="hits" value="53 hits in 1158 CRISPR screens"/>
</dbReference>
<dbReference type="ChiTaRS" id="AVPR1A">
    <property type="organism name" value="human"/>
</dbReference>
<dbReference type="EvolutionaryTrace" id="P37288"/>
<dbReference type="GeneWiki" id="Arginine_vasopressin_receptor_1A"/>
<dbReference type="GenomeRNAi" id="552"/>
<dbReference type="Pharos" id="P37288">
    <property type="development level" value="Tclin"/>
</dbReference>
<dbReference type="PRO" id="PR:P37288"/>
<dbReference type="Proteomes" id="UP000005640">
    <property type="component" value="Chromosome 12"/>
</dbReference>
<dbReference type="RNAct" id="P37288">
    <property type="molecule type" value="protein"/>
</dbReference>
<dbReference type="Bgee" id="ENSG00000166148">
    <property type="expression patterns" value="Expressed in left adrenal gland and 139 other cell types or tissues"/>
</dbReference>
<dbReference type="ExpressionAtlas" id="P37288">
    <property type="expression patterns" value="baseline and differential"/>
</dbReference>
<dbReference type="GO" id="GO:0030139">
    <property type="term" value="C:endocytic vesicle"/>
    <property type="evidence" value="ECO:0000314"/>
    <property type="project" value="ARUK-UCL"/>
</dbReference>
<dbReference type="GO" id="GO:0005768">
    <property type="term" value="C:endosome"/>
    <property type="evidence" value="ECO:0000314"/>
    <property type="project" value="ARUK-UCL"/>
</dbReference>
<dbReference type="GO" id="GO:0005886">
    <property type="term" value="C:plasma membrane"/>
    <property type="evidence" value="ECO:0000314"/>
    <property type="project" value="ARUK-UCL"/>
</dbReference>
<dbReference type="GO" id="GO:0017046">
    <property type="term" value="F:peptide hormone binding"/>
    <property type="evidence" value="ECO:0007669"/>
    <property type="project" value="Ensembl"/>
</dbReference>
<dbReference type="GO" id="GO:0005080">
    <property type="term" value="F:protein kinase C binding"/>
    <property type="evidence" value="ECO:0000304"/>
    <property type="project" value="ProtInc"/>
</dbReference>
<dbReference type="GO" id="GO:0031894">
    <property type="term" value="F:V1A vasopressin receptor binding"/>
    <property type="evidence" value="ECO:0007669"/>
    <property type="project" value="Ensembl"/>
</dbReference>
<dbReference type="GO" id="GO:0005000">
    <property type="term" value="F:vasopressin receptor activity"/>
    <property type="evidence" value="ECO:0000314"/>
    <property type="project" value="ARUK-UCL"/>
</dbReference>
<dbReference type="GO" id="GO:0008015">
    <property type="term" value="P:blood circulation"/>
    <property type="evidence" value="ECO:0000304"/>
    <property type="project" value="ProtInc"/>
</dbReference>
<dbReference type="GO" id="GO:0019722">
    <property type="term" value="P:calcium-mediated signaling"/>
    <property type="evidence" value="ECO:0007669"/>
    <property type="project" value="Ensembl"/>
</dbReference>
<dbReference type="GO" id="GO:0032870">
    <property type="term" value="P:cellular response to hormone stimulus"/>
    <property type="evidence" value="ECO:0000318"/>
    <property type="project" value="GO_Central"/>
</dbReference>
<dbReference type="GO" id="GO:0042631">
    <property type="term" value="P:cellular response to water deprivation"/>
    <property type="evidence" value="ECO:0007669"/>
    <property type="project" value="Ensembl"/>
</dbReference>
<dbReference type="GO" id="GO:0007186">
    <property type="term" value="P:G protein-coupled receptor signaling pathway"/>
    <property type="evidence" value="ECO:0000314"/>
    <property type="project" value="UniProtKB"/>
</dbReference>
<dbReference type="GO" id="GO:0006091">
    <property type="term" value="P:generation of precursor metabolites and energy"/>
    <property type="evidence" value="ECO:0000304"/>
    <property type="project" value="ProtInc"/>
</dbReference>
<dbReference type="GO" id="GO:0007625">
    <property type="term" value="P:grooming behavior"/>
    <property type="evidence" value="ECO:0007669"/>
    <property type="project" value="Ensembl"/>
</dbReference>
<dbReference type="GO" id="GO:0002125">
    <property type="term" value="P:maternal aggressive behavior"/>
    <property type="evidence" value="ECO:0007669"/>
    <property type="project" value="Ensembl"/>
</dbReference>
<dbReference type="GO" id="GO:0042711">
    <property type="term" value="P:maternal behavior"/>
    <property type="evidence" value="ECO:0007669"/>
    <property type="project" value="Ensembl"/>
</dbReference>
<dbReference type="GO" id="GO:0014902">
    <property type="term" value="P:myotube differentiation"/>
    <property type="evidence" value="ECO:0007669"/>
    <property type="project" value="Ensembl"/>
</dbReference>
<dbReference type="GO" id="GO:0007621">
    <property type="term" value="P:negative regulation of female receptivity"/>
    <property type="evidence" value="ECO:0007669"/>
    <property type="project" value="Ensembl"/>
</dbReference>
<dbReference type="GO" id="GO:0051970">
    <property type="term" value="P:negative regulation of transmission of nerve impulse"/>
    <property type="evidence" value="ECO:0007669"/>
    <property type="project" value="Ensembl"/>
</dbReference>
<dbReference type="GO" id="GO:0030307">
    <property type="term" value="P:positive regulation of cell growth"/>
    <property type="evidence" value="ECO:0007669"/>
    <property type="project" value="Ensembl"/>
</dbReference>
<dbReference type="GO" id="GO:0008284">
    <property type="term" value="P:positive regulation of cell population proliferation"/>
    <property type="evidence" value="ECO:0007669"/>
    <property type="project" value="Ensembl"/>
</dbReference>
<dbReference type="GO" id="GO:0032849">
    <property type="term" value="P:positive regulation of cellular pH reduction"/>
    <property type="evidence" value="ECO:0007669"/>
    <property type="project" value="Ensembl"/>
</dbReference>
<dbReference type="GO" id="GO:0007204">
    <property type="term" value="P:positive regulation of cytosolic calcium ion concentration"/>
    <property type="evidence" value="ECO:0000304"/>
    <property type="project" value="ProtInc"/>
</dbReference>
<dbReference type="GO" id="GO:0014049">
    <property type="term" value="P:positive regulation of glutamate secretion"/>
    <property type="evidence" value="ECO:0007669"/>
    <property type="project" value="Ensembl"/>
</dbReference>
<dbReference type="GO" id="GO:0010460">
    <property type="term" value="P:positive regulation of heart rate"/>
    <property type="evidence" value="ECO:0007669"/>
    <property type="project" value="Ensembl"/>
</dbReference>
<dbReference type="GO" id="GO:0031394">
    <property type="term" value="P:positive regulation of prostaglandin biosynthetic process"/>
    <property type="evidence" value="ECO:0007669"/>
    <property type="project" value="Ensembl"/>
</dbReference>
<dbReference type="GO" id="GO:0003084">
    <property type="term" value="P:positive regulation of systemic arterial blood pressure"/>
    <property type="evidence" value="ECO:0007669"/>
    <property type="project" value="Ensembl"/>
</dbReference>
<dbReference type="GO" id="GO:0045907">
    <property type="term" value="P:positive regulation of vasoconstriction"/>
    <property type="evidence" value="ECO:0000318"/>
    <property type="project" value="GO_Central"/>
</dbReference>
<dbReference type="GO" id="GO:0001992">
    <property type="term" value="P:regulation of systemic arterial blood pressure by vasopressin"/>
    <property type="evidence" value="ECO:0000318"/>
    <property type="project" value="GO_Central"/>
</dbReference>
<dbReference type="GO" id="GO:0051412">
    <property type="term" value="P:response to corticosterone"/>
    <property type="evidence" value="ECO:0007669"/>
    <property type="project" value="Ensembl"/>
</dbReference>
<dbReference type="GO" id="GO:0035176">
    <property type="term" value="P:social behavior"/>
    <property type="evidence" value="ECO:0007669"/>
    <property type="project" value="Ensembl"/>
</dbReference>
<dbReference type="GO" id="GO:0042713">
    <property type="term" value="P:sperm ejaculation"/>
    <property type="evidence" value="ECO:0007669"/>
    <property type="project" value="Ensembl"/>
</dbReference>
<dbReference type="GO" id="GO:0021537">
    <property type="term" value="P:telencephalon development"/>
    <property type="evidence" value="ECO:0007669"/>
    <property type="project" value="Ensembl"/>
</dbReference>
<dbReference type="GO" id="GO:0150104">
    <property type="term" value="P:transport across blood-brain barrier"/>
    <property type="evidence" value="ECO:0000303"/>
    <property type="project" value="ARUK-UCL"/>
</dbReference>
<dbReference type="CDD" id="cd15385">
    <property type="entry name" value="7tmA_V1aR"/>
    <property type="match status" value="1"/>
</dbReference>
<dbReference type="FunFam" id="1.20.1070.10:FF:000094">
    <property type="entry name" value="Vasopressin V1a receptor"/>
    <property type="match status" value="1"/>
</dbReference>
<dbReference type="Gene3D" id="1.20.1070.10">
    <property type="entry name" value="Rhodopsin 7-helix transmembrane proteins"/>
    <property type="match status" value="1"/>
</dbReference>
<dbReference type="InterPro" id="IPR000276">
    <property type="entry name" value="GPCR_Rhodpsn"/>
</dbReference>
<dbReference type="InterPro" id="IPR017452">
    <property type="entry name" value="GPCR_Rhodpsn_7TM"/>
</dbReference>
<dbReference type="InterPro" id="IPR015076">
    <property type="entry name" value="V1R_C"/>
</dbReference>
<dbReference type="InterPro" id="IPR001817">
    <property type="entry name" value="Vasoprsn_rcpt"/>
</dbReference>
<dbReference type="InterPro" id="IPR001224">
    <property type="entry name" value="Vprs_V1A_rcpt"/>
</dbReference>
<dbReference type="PANTHER" id="PTHR24241">
    <property type="entry name" value="NEUROPEPTIDE RECEPTOR-RELATED G-PROTEIN COUPLED RECEPTOR"/>
    <property type="match status" value="1"/>
</dbReference>
<dbReference type="PANTHER" id="PTHR24241:SF17">
    <property type="entry name" value="VASOPRESSIN V1A RECEPTOR"/>
    <property type="match status" value="1"/>
</dbReference>
<dbReference type="Pfam" id="PF00001">
    <property type="entry name" value="7tm_1"/>
    <property type="match status" value="1"/>
</dbReference>
<dbReference type="Pfam" id="PF08983">
    <property type="entry name" value="V1R_C"/>
    <property type="match status" value="1"/>
</dbReference>
<dbReference type="PRINTS" id="PR00237">
    <property type="entry name" value="GPCRRHODOPSN"/>
</dbReference>
<dbReference type="PRINTS" id="PR00896">
    <property type="entry name" value="VASOPRESSINR"/>
</dbReference>
<dbReference type="PRINTS" id="PR00752">
    <property type="entry name" value="VASOPRSNV1AR"/>
</dbReference>
<dbReference type="SMART" id="SM01164">
    <property type="entry name" value="DUF1856"/>
    <property type="match status" value="1"/>
</dbReference>
<dbReference type="SUPFAM" id="SSF81321">
    <property type="entry name" value="Family A G protein-coupled receptor-like"/>
    <property type="match status" value="1"/>
</dbReference>
<dbReference type="PROSITE" id="PS00237">
    <property type="entry name" value="G_PROTEIN_RECEP_F1_1"/>
    <property type="match status" value="1"/>
</dbReference>
<dbReference type="PROSITE" id="PS50262">
    <property type="entry name" value="G_PROTEIN_RECEP_F1_2"/>
    <property type="match status" value="1"/>
</dbReference>
<proteinExistence type="evidence at protein level"/>
<keyword id="KW-0002">3D-structure</keyword>
<keyword id="KW-1003">Cell membrane</keyword>
<keyword id="KW-1015">Disulfide bond</keyword>
<keyword id="KW-0297">G-protein coupled receptor</keyword>
<keyword id="KW-0325">Glycoprotein</keyword>
<keyword id="KW-0449">Lipoprotein</keyword>
<keyword id="KW-0472">Membrane</keyword>
<keyword id="KW-0564">Palmitate</keyword>
<keyword id="KW-0597">Phosphoprotein</keyword>
<keyword id="KW-1267">Proteomics identification</keyword>
<keyword id="KW-0675">Receptor</keyword>
<keyword id="KW-1185">Reference proteome</keyword>
<keyword id="KW-0807">Transducer</keyword>
<keyword id="KW-0812">Transmembrane</keyword>
<keyword id="KW-1133">Transmembrane helix</keyword>
<reference key="1">
    <citation type="journal article" date="1994" name="J. Biol. Chem.">
        <title>Molecular cloning, sequencing, and functional expression of a cDNA encoding the human V1a vasopressin receptor.</title>
        <authorList>
            <person name="Thibonnier M."/>
            <person name="Auzan C."/>
            <person name="Madhun Z."/>
            <person name="Wilkins P."/>
            <person name="Berti-Mattera L."/>
            <person name="Clauser E."/>
        </authorList>
    </citation>
    <scope>NUCLEOTIDE SEQUENCE [MRNA]</scope>
    <source>
        <tissue>Liver</tissue>
    </source>
</reference>
<reference key="2">
    <citation type="journal article" date="1994" name="Biochem. Biophys. Res. Commun.">
        <title>Cloning, functional expression and tissue distribution of human cDNA for the vascular-type vasopressin receptor.</title>
        <authorList>
            <person name="Hirasawa A."/>
            <person name="Shibata K."/>
            <person name="Kotosai K."/>
            <person name="Tsujimoto G."/>
        </authorList>
    </citation>
    <scope>NUCLEOTIDE SEQUENCE [MRNA]</scope>
    <source>
        <tissue>Liver</tissue>
    </source>
</reference>
<reference key="3">
    <citation type="journal article" date="1997" name="Peptides">
        <title>Functional vasopressin V1 type receptors are present in variant as well as classical forms of small-cell carcinoma.</title>
        <authorList>
            <person name="North W.G."/>
            <person name="Fay M.J."/>
            <person name="Longo K.A."/>
            <person name="Du J."/>
        </authorList>
    </citation>
    <scope>NUCLEOTIDE SEQUENCE [MRNA]</scope>
    <source>
        <tissue>Lung</tissue>
    </source>
</reference>
<reference key="4">
    <citation type="journal article" date="1998" name="Cancer Res.">
        <title>Expression of all known vasopressin receptor subtypes by small cell tumors implies a multifaceted role for this neuropeptide.</title>
        <authorList>
            <person name="North W.G."/>
            <person name="Fay M.J."/>
            <person name="Longo K.A."/>
            <person name="Du J."/>
        </authorList>
    </citation>
    <scope>NUCLEOTIDE SEQUENCE [MRNA]</scope>
</reference>
<reference key="5">
    <citation type="submission" date="2003-06" db="EMBL/GenBank/DDBJ databases">
        <title>cDNA clones of human proteins involved in signal transduction sequenced by the Guthrie cDNA resource center (www.cdna.org).</title>
        <authorList>
            <person name="Kopatz S.A."/>
            <person name="Aronstam R.S."/>
            <person name="Sharma S.V."/>
        </authorList>
    </citation>
    <scope>NUCLEOTIDE SEQUENCE [LARGE SCALE MRNA]</scope>
    <source>
        <tissue>Liver</tissue>
    </source>
</reference>
<reference key="6">
    <citation type="journal article" date="2004" name="Genome Res.">
        <title>The status, quality, and expansion of the NIH full-length cDNA project: the Mammalian Gene Collection (MGC).</title>
        <authorList>
            <consortium name="The MGC Project Team"/>
        </authorList>
    </citation>
    <scope>NUCLEOTIDE SEQUENCE [LARGE SCALE MRNA]</scope>
    <source>
        <tissue>Lung</tissue>
    </source>
</reference>
<reference key="7">
    <citation type="journal article" date="2002" name="Mol. Psychiatry">
        <title>Transmission disequilibrium testing of arginine vasopressin receptor 1A (AVPR1A) polymorphisms in autism.</title>
        <authorList>
            <person name="Kim S.J."/>
            <person name="Young L.J."/>
            <person name="Gonen D."/>
            <person name="Veenstra-VanderWeele J."/>
            <person name="Courchesne R."/>
            <person name="Courchesne E."/>
            <person name="Lord C."/>
            <person name="Leventhal B.L."/>
            <person name="Cook E.H. Jr."/>
            <person name="Insel T.R."/>
        </authorList>
    </citation>
    <scope>ROLE IN SOCIAL BEHAVIOR</scope>
</reference>
<reference key="8">
    <citation type="journal article" date="2005" name="Acta Crystallogr. F">
        <title>A C-terminal segment of the V1R vasopressin receptor is unstructured in the crystal structure of its chimera with the maltose-binding protein.</title>
        <authorList>
            <person name="Adikesavan N.V."/>
            <person name="Mahmood S.S."/>
            <person name="Stanley N."/>
            <person name="Xu Z."/>
            <person name="Wu N."/>
            <person name="Thibonnier M."/>
            <person name="Shoham M."/>
        </authorList>
    </citation>
    <scope>X-RAY CRYSTALLOGRAPHY (1.8 ANGSTROMS) OF 362-418</scope>
</reference>
<comment type="function">
    <text evidence="6">Receptor for arginine vasopressin. The activity of this receptor is mediated by G proteins which activate a phosphatidyl-inositol-calcium second messenger system. Has been involved in social behaviors, including affiliation and attachment.</text>
</comment>
<comment type="interaction">
    <interactant intactId="EBI-6656842">
        <id>P37288</id>
    </interactant>
    <interactant intactId="EBI-1965291">
        <id>P25106</id>
        <label>ACKR3</label>
    </interactant>
    <organismsDiffer>false</organismsDiffer>
    <experiments>7</experiments>
</comment>
<comment type="subcellular location">
    <subcellularLocation>
        <location>Cell membrane</location>
        <topology>Multi-pass membrane protein</topology>
    </subcellularLocation>
</comment>
<comment type="miscellaneous">
    <text>Differences in regional receptor expression in the brain as well as differences in social behavior may result from a highly variable repetitive sequence in the 5' flanking region of AVPR1A. One such allelic variant has been linked to autism.</text>
</comment>
<comment type="similarity">
    <text evidence="4">Belongs to the G-protein coupled receptor 1 family. Vasopressin/oxytocin receptor subfamily.</text>
</comment>
<name>V1AR_HUMAN</name>
<evidence type="ECO:0000250" key="1"/>
<evidence type="ECO:0000250" key="2">
    <source>
        <dbReference type="UniProtKB" id="Q62463"/>
    </source>
</evidence>
<evidence type="ECO:0000255" key="3"/>
<evidence type="ECO:0000255" key="4">
    <source>
        <dbReference type="PROSITE-ProRule" id="PRU00521"/>
    </source>
</evidence>
<evidence type="ECO:0000256" key="5">
    <source>
        <dbReference type="SAM" id="MobiDB-lite"/>
    </source>
</evidence>
<evidence type="ECO:0000269" key="6">
    <source>
    </source>
</evidence>
<gene>
    <name type="primary">AVPR1A</name>
    <name type="synonym">AVPR1</name>
</gene>
<sequence length="418" mass="46800">MRLSAGPDAGPSGNSSPWWPLATGAGNTSREAEALGEGNGPPRDVRNEELAKLEIAVLAVTFAVAVLGNSSVLLALHRTPRKTSRMHLFIRHLSLADLAVAFFQVLPQMCWDITYRFRGPDWLCRVVKHLQVFGMFASAYMLVVMTADRYIAVCHPLKTLQQPARRSRLMIAAAWVLSFVLSTPQYFVFSMIEVNNVTKARDCWATFIQPWGSRAYVTWMTGGIFVAPVVILGTCYGFICYNIWCNVRGKTASRQSKGAEQAGVAFQKGFLLAPCVSSVKSISRAKIRTVKMTFVIVTAYIVCWAPFFIIQMWSVWDPMSVWTESENPTITITALLGSLNSCCNPWIYMFFSGHLLQDCVQSFPCCQNMKEKFNKEDTDSMSRRQTFYSNNRSPTNSTGMWKDSPKSSKSIKFIPVST</sequence>
<feature type="chain" id="PRO_0000070197" description="Vasopressin V1a receptor">
    <location>
        <begin position="1"/>
        <end position="418"/>
    </location>
</feature>
<feature type="topological domain" description="Extracellular" evidence="3">
    <location>
        <begin position="1"/>
        <end position="52"/>
    </location>
</feature>
<feature type="transmembrane region" description="Helical; Name=1" evidence="3">
    <location>
        <begin position="53"/>
        <end position="76"/>
    </location>
</feature>
<feature type="topological domain" description="Cytoplasmic" evidence="3">
    <location>
        <begin position="77"/>
        <end position="88"/>
    </location>
</feature>
<feature type="transmembrane region" description="Helical; Name=2" evidence="3">
    <location>
        <begin position="89"/>
        <end position="110"/>
    </location>
</feature>
<feature type="topological domain" description="Extracellular" evidence="3">
    <location>
        <begin position="111"/>
        <end position="125"/>
    </location>
</feature>
<feature type="transmembrane region" description="Helical; Name=3" evidence="3">
    <location>
        <begin position="126"/>
        <end position="147"/>
    </location>
</feature>
<feature type="topological domain" description="Cytoplasmic" evidence="3">
    <location>
        <begin position="148"/>
        <end position="168"/>
    </location>
</feature>
<feature type="transmembrane region" description="Helical; Name=4" evidence="3">
    <location>
        <begin position="169"/>
        <end position="190"/>
    </location>
</feature>
<feature type="topological domain" description="Extracellular" evidence="3">
    <location>
        <begin position="191"/>
        <end position="218"/>
    </location>
</feature>
<feature type="transmembrane region" description="Helical; Name=5" evidence="3">
    <location>
        <begin position="219"/>
        <end position="239"/>
    </location>
</feature>
<feature type="topological domain" description="Cytoplasmic" evidence="3">
    <location>
        <begin position="240"/>
        <end position="293"/>
    </location>
</feature>
<feature type="transmembrane region" description="Helical; Name=6" evidence="3">
    <location>
        <begin position="294"/>
        <end position="313"/>
    </location>
</feature>
<feature type="topological domain" description="Extracellular" evidence="3">
    <location>
        <begin position="314"/>
        <end position="331"/>
    </location>
</feature>
<feature type="transmembrane region" description="Helical; Name=7" evidence="3">
    <location>
        <begin position="332"/>
        <end position="351"/>
    </location>
</feature>
<feature type="topological domain" description="Cytoplasmic" evidence="3">
    <location>
        <begin position="352"/>
        <end position="418"/>
    </location>
</feature>
<feature type="region of interest" description="Disordered" evidence="5">
    <location>
        <begin position="1"/>
        <end position="43"/>
    </location>
</feature>
<feature type="region of interest" description="Disordered" evidence="5">
    <location>
        <begin position="377"/>
        <end position="410"/>
    </location>
</feature>
<feature type="compositionally biased region" description="Polar residues" evidence="5">
    <location>
        <begin position="383"/>
        <end position="399"/>
    </location>
</feature>
<feature type="modified residue" description="Phosphoserine" evidence="2">
    <location>
        <position position="404"/>
    </location>
</feature>
<feature type="lipid moiety-binding region" description="S-palmitoyl cysteine" evidence="1">
    <location>
        <position position="365"/>
    </location>
</feature>
<feature type="lipid moiety-binding region" description="S-palmitoyl cysteine" evidence="1">
    <location>
        <position position="366"/>
    </location>
</feature>
<feature type="glycosylation site" description="N-linked (GlcNAc...) asparagine" evidence="3">
    <location>
        <position position="27"/>
    </location>
</feature>
<feature type="glycosylation site" description="N-linked (GlcNAc...) asparagine" evidence="3">
    <location>
        <position position="196"/>
    </location>
</feature>
<feature type="disulfide bond" evidence="4">
    <location>
        <begin position="124"/>
        <end position="203"/>
    </location>
</feature>
<feature type="sequence variant" id="VAR_022065" description="In dbSNP:rs2228154.">
    <original>G</original>
    <variation>S</variation>
    <location>
        <position position="6"/>
    </location>
</feature>
<organism>
    <name type="scientific">Homo sapiens</name>
    <name type="common">Human</name>
    <dbReference type="NCBI Taxonomy" id="9606"/>
    <lineage>
        <taxon>Eukaryota</taxon>
        <taxon>Metazoa</taxon>
        <taxon>Chordata</taxon>
        <taxon>Craniata</taxon>
        <taxon>Vertebrata</taxon>
        <taxon>Euteleostomi</taxon>
        <taxon>Mammalia</taxon>
        <taxon>Eutheria</taxon>
        <taxon>Euarchontoglires</taxon>
        <taxon>Primates</taxon>
        <taxon>Haplorrhini</taxon>
        <taxon>Catarrhini</taxon>
        <taxon>Hominidae</taxon>
        <taxon>Homo</taxon>
    </lineage>
</organism>